<dbReference type="EC" id="2.7.1.11" evidence="1"/>
<dbReference type="EMBL" id="AE017198">
    <property type="protein sequence ID" value="AAS08901.1"/>
    <property type="molecule type" value="Genomic_DNA"/>
</dbReference>
<dbReference type="RefSeq" id="WP_011161928.1">
    <property type="nucleotide sequence ID" value="NC_005362.1"/>
</dbReference>
<dbReference type="SMR" id="Q74JM8"/>
<dbReference type="KEGG" id="ljo:LJ_1079"/>
<dbReference type="eggNOG" id="COG0205">
    <property type="taxonomic scope" value="Bacteria"/>
</dbReference>
<dbReference type="HOGENOM" id="CLU_020655_0_1_9"/>
<dbReference type="UniPathway" id="UPA00109">
    <property type="reaction ID" value="UER00182"/>
</dbReference>
<dbReference type="Proteomes" id="UP000000581">
    <property type="component" value="Chromosome"/>
</dbReference>
<dbReference type="GO" id="GO:0005945">
    <property type="term" value="C:6-phosphofructokinase complex"/>
    <property type="evidence" value="ECO:0007669"/>
    <property type="project" value="TreeGrafter"/>
</dbReference>
<dbReference type="GO" id="GO:0003872">
    <property type="term" value="F:6-phosphofructokinase activity"/>
    <property type="evidence" value="ECO:0007669"/>
    <property type="project" value="UniProtKB-UniRule"/>
</dbReference>
<dbReference type="GO" id="GO:0016208">
    <property type="term" value="F:AMP binding"/>
    <property type="evidence" value="ECO:0007669"/>
    <property type="project" value="TreeGrafter"/>
</dbReference>
<dbReference type="GO" id="GO:0005524">
    <property type="term" value="F:ATP binding"/>
    <property type="evidence" value="ECO:0007669"/>
    <property type="project" value="UniProtKB-KW"/>
</dbReference>
<dbReference type="GO" id="GO:0070095">
    <property type="term" value="F:fructose-6-phosphate binding"/>
    <property type="evidence" value="ECO:0007669"/>
    <property type="project" value="TreeGrafter"/>
</dbReference>
<dbReference type="GO" id="GO:0042802">
    <property type="term" value="F:identical protein binding"/>
    <property type="evidence" value="ECO:0007669"/>
    <property type="project" value="TreeGrafter"/>
</dbReference>
<dbReference type="GO" id="GO:0046872">
    <property type="term" value="F:metal ion binding"/>
    <property type="evidence" value="ECO:0007669"/>
    <property type="project" value="UniProtKB-KW"/>
</dbReference>
<dbReference type="GO" id="GO:0048029">
    <property type="term" value="F:monosaccharide binding"/>
    <property type="evidence" value="ECO:0007669"/>
    <property type="project" value="TreeGrafter"/>
</dbReference>
<dbReference type="GO" id="GO:0061621">
    <property type="term" value="P:canonical glycolysis"/>
    <property type="evidence" value="ECO:0007669"/>
    <property type="project" value="TreeGrafter"/>
</dbReference>
<dbReference type="GO" id="GO:0030388">
    <property type="term" value="P:fructose 1,6-bisphosphate metabolic process"/>
    <property type="evidence" value="ECO:0007669"/>
    <property type="project" value="TreeGrafter"/>
</dbReference>
<dbReference type="GO" id="GO:0006002">
    <property type="term" value="P:fructose 6-phosphate metabolic process"/>
    <property type="evidence" value="ECO:0007669"/>
    <property type="project" value="InterPro"/>
</dbReference>
<dbReference type="CDD" id="cd00763">
    <property type="entry name" value="Bacterial_PFK"/>
    <property type="match status" value="1"/>
</dbReference>
<dbReference type="FunFam" id="3.40.50.450:FF:000001">
    <property type="entry name" value="ATP-dependent 6-phosphofructokinase"/>
    <property type="match status" value="1"/>
</dbReference>
<dbReference type="FunFam" id="3.40.50.460:FF:000002">
    <property type="entry name" value="ATP-dependent 6-phosphofructokinase"/>
    <property type="match status" value="1"/>
</dbReference>
<dbReference type="Gene3D" id="3.40.50.450">
    <property type="match status" value="1"/>
</dbReference>
<dbReference type="Gene3D" id="3.40.50.460">
    <property type="entry name" value="Phosphofructokinase domain"/>
    <property type="match status" value="1"/>
</dbReference>
<dbReference type="HAMAP" id="MF_00339">
    <property type="entry name" value="Phosphofructokinase_I_B1"/>
    <property type="match status" value="1"/>
</dbReference>
<dbReference type="InterPro" id="IPR022953">
    <property type="entry name" value="ATP_PFK"/>
</dbReference>
<dbReference type="InterPro" id="IPR012003">
    <property type="entry name" value="ATP_PFK_prok-type"/>
</dbReference>
<dbReference type="InterPro" id="IPR012828">
    <property type="entry name" value="PFKA_ATP_prok"/>
</dbReference>
<dbReference type="InterPro" id="IPR015912">
    <property type="entry name" value="Phosphofructokinase_CS"/>
</dbReference>
<dbReference type="InterPro" id="IPR000023">
    <property type="entry name" value="Phosphofructokinase_dom"/>
</dbReference>
<dbReference type="InterPro" id="IPR035966">
    <property type="entry name" value="PKF_sf"/>
</dbReference>
<dbReference type="NCBIfam" id="TIGR02482">
    <property type="entry name" value="PFKA_ATP"/>
    <property type="match status" value="1"/>
</dbReference>
<dbReference type="NCBIfam" id="NF002872">
    <property type="entry name" value="PRK03202.1"/>
    <property type="match status" value="1"/>
</dbReference>
<dbReference type="PANTHER" id="PTHR13697:SF4">
    <property type="entry name" value="ATP-DEPENDENT 6-PHOSPHOFRUCTOKINASE"/>
    <property type="match status" value="1"/>
</dbReference>
<dbReference type="PANTHER" id="PTHR13697">
    <property type="entry name" value="PHOSPHOFRUCTOKINASE"/>
    <property type="match status" value="1"/>
</dbReference>
<dbReference type="Pfam" id="PF00365">
    <property type="entry name" value="PFK"/>
    <property type="match status" value="1"/>
</dbReference>
<dbReference type="PIRSF" id="PIRSF000532">
    <property type="entry name" value="ATP_PFK_prok"/>
    <property type="match status" value="1"/>
</dbReference>
<dbReference type="PRINTS" id="PR00476">
    <property type="entry name" value="PHFRCTKINASE"/>
</dbReference>
<dbReference type="SUPFAM" id="SSF53784">
    <property type="entry name" value="Phosphofructokinase"/>
    <property type="match status" value="1"/>
</dbReference>
<dbReference type="PROSITE" id="PS00433">
    <property type="entry name" value="PHOSPHOFRUCTOKINASE"/>
    <property type="match status" value="1"/>
</dbReference>
<name>PFKA_LACJO</name>
<organism>
    <name type="scientific">Lactobacillus johnsonii (strain CNCM I-12250 / La1 / NCC 533)</name>
    <dbReference type="NCBI Taxonomy" id="257314"/>
    <lineage>
        <taxon>Bacteria</taxon>
        <taxon>Bacillati</taxon>
        <taxon>Bacillota</taxon>
        <taxon>Bacilli</taxon>
        <taxon>Lactobacillales</taxon>
        <taxon>Lactobacillaceae</taxon>
        <taxon>Lactobacillus</taxon>
    </lineage>
</organism>
<sequence>MKRIGILTSGGDAPGMNAAIRAVTRTALANGIEVCGIRYGYAGLVAGDIFQMTSETVADKISRGGTFLYSARFPEFKEEEVQLKGIEQLKKHGIDALVVIGGDGSYHGALKLTRHGYNAIGLPGSIDNDIPYTDYTIGFDTACNTAMEAIDKIRDTATSHQRVFVVNVMGRDCGDIAMHVGVATGADAIVIPEEPYDIKEIAENLKQGFANGKKHGIVVLAEGVMDAEKFKDELLKYGDFDARANVLGHMQRGGSPTMRDRVVASEMGAYAVKLLLEGKGGLAVGMENNKLTHHDILDLFDAKHHGNYALYSLNKDLAK</sequence>
<reference key="1">
    <citation type="journal article" date="2004" name="Proc. Natl. Acad. Sci. U.S.A.">
        <title>The genome sequence of the probiotic intestinal bacterium Lactobacillus johnsonii NCC 533.</title>
        <authorList>
            <person name="Pridmore R.D."/>
            <person name="Berger B."/>
            <person name="Desiere F."/>
            <person name="Vilanova D."/>
            <person name="Barretto C."/>
            <person name="Pittet A.-C."/>
            <person name="Zwahlen M.-C."/>
            <person name="Rouvet M."/>
            <person name="Altermann E."/>
            <person name="Barrangou R."/>
            <person name="Mollet B."/>
            <person name="Mercenier A."/>
            <person name="Klaenhammer T."/>
            <person name="Arigoni F."/>
            <person name="Schell M.A."/>
        </authorList>
    </citation>
    <scope>NUCLEOTIDE SEQUENCE [LARGE SCALE GENOMIC DNA]</scope>
    <source>
        <strain>CNCM I-1225 / La1 / NCC 533</strain>
    </source>
</reference>
<protein>
    <recommendedName>
        <fullName evidence="1">ATP-dependent 6-phosphofructokinase</fullName>
        <shortName evidence="1">ATP-PFK</shortName>
        <shortName evidence="1">Phosphofructokinase</shortName>
        <ecNumber evidence="1">2.7.1.11</ecNumber>
    </recommendedName>
    <alternativeName>
        <fullName evidence="1">Phosphohexokinase</fullName>
    </alternativeName>
</protein>
<accession>Q74JM8</accession>
<keyword id="KW-0021">Allosteric enzyme</keyword>
<keyword id="KW-0067">ATP-binding</keyword>
<keyword id="KW-0963">Cytoplasm</keyword>
<keyword id="KW-0324">Glycolysis</keyword>
<keyword id="KW-0418">Kinase</keyword>
<keyword id="KW-0460">Magnesium</keyword>
<keyword id="KW-0479">Metal-binding</keyword>
<keyword id="KW-0547">Nucleotide-binding</keyword>
<keyword id="KW-0808">Transferase</keyword>
<comment type="function">
    <text evidence="1">Catalyzes the phosphorylation of D-fructose 6-phosphate to fructose 1,6-bisphosphate by ATP, the first committing step of glycolysis.</text>
</comment>
<comment type="catalytic activity">
    <reaction evidence="1">
        <text>beta-D-fructose 6-phosphate + ATP = beta-D-fructose 1,6-bisphosphate + ADP + H(+)</text>
        <dbReference type="Rhea" id="RHEA:16109"/>
        <dbReference type="ChEBI" id="CHEBI:15378"/>
        <dbReference type="ChEBI" id="CHEBI:30616"/>
        <dbReference type="ChEBI" id="CHEBI:32966"/>
        <dbReference type="ChEBI" id="CHEBI:57634"/>
        <dbReference type="ChEBI" id="CHEBI:456216"/>
        <dbReference type="EC" id="2.7.1.11"/>
    </reaction>
</comment>
<comment type="cofactor">
    <cofactor evidence="1">
        <name>Mg(2+)</name>
        <dbReference type="ChEBI" id="CHEBI:18420"/>
    </cofactor>
</comment>
<comment type="activity regulation">
    <text evidence="1">Allosterically activated by ADP and other diphosphonucleosides, and allosterically inhibited by phosphoenolpyruvate.</text>
</comment>
<comment type="pathway">
    <text evidence="1">Carbohydrate degradation; glycolysis; D-glyceraldehyde 3-phosphate and glycerone phosphate from D-glucose: step 3/4.</text>
</comment>
<comment type="subunit">
    <text evidence="1">Homotetramer.</text>
</comment>
<comment type="subcellular location">
    <subcellularLocation>
        <location evidence="1">Cytoplasm</location>
    </subcellularLocation>
</comment>
<comment type="similarity">
    <text evidence="1">Belongs to the phosphofructokinase type A (PFKA) family. ATP-dependent PFK group I subfamily. Prokaryotic clade 'B1' sub-subfamily.</text>
</comment>
<evidence type="ECO:0000255" key="1">
    <source>
        <dbReference type="HAMAP-Rule" id="MF_00339"/>
    </source>
</evidence>
<gene>
    <name evidence="1" type="primary">pfkA</name>
    <name type="ordered locus">LJ_1079</name>
</gene>
<feature type="chain" id="PRO_1000059772" description="ATP-dependent 6-phosphofructokinase">
    <location>
        <begin position="1"/>
        <end position="319"/>
    </location>
</feature>
<feature type="active site" description="Proton acceptor" evidence="1">
    <location>
        <position position="127"/>
    </location>
</feature>
<feature type="binding site" evidence="1">
    <location>
        <position position="11"/>
    </location>
    <ligand>
        <name>ATP</name>
        <dbReference type="ChEBI" id="CHEBI:30616"/>
    </ligand>
</feature>
<feature type="binding site" evidence="1">
    <location>
        <begin position="21"/>
        <end position="25"/>
    </location>
    <ligand>
        <name>ADP</name>
        <dbReference type="ChEBI" id="CHEBI:456216"/>
        <note>allosteric activator; ligand shared between dimeric partners</note>
    </ligand>
</feature>
<feature type="binding site" evidence="1">
    <location>
        <begin position="72"/>
        <end position="73"/>
    </location>
    <ligand>
        <name>ATP</name>
        <dbReference type="ChEBI" id="CHEBI:30616"/>
    </ligand>
</feature>
<feature type="binding site" evidence="1">
    <location>
        <begin position="102"/>
        <end position="105"/>
    </location>
    <ligand>
        <name>ATP</name>
        <dbReference type="ChEBI" id="CHEBI:30616"/>
    </ligand>
</feature>
<feature type="binding site" evidence="1">
    <location>
        <position position="103"/>
    </location>
    <ligand>
        <name>Mg(2+)</name>
        <dbReference type="ChEBI" id="CHEBI:18420"/>
        <note>catalytic</note>
    </ligand>
</feature>
<feature type="binding site" description="in other chain" evidence="1">
    <location>
        <begin position="125"/>
        <end position="127"/>
    </location>
    <ligand>
        <name>substrate</name>
        <note>ligand shared between dimeric partners</note>
    </ligand>
</feature>
<feature type="binding site" description="in other chain" evidence="1">
    <location>
        <position position="154"/>
    </location>
    <ligand>
        <name>ADP</name>
        <dbReference type="ChEBI" id="CHEBI:456216"/>
        <note>allosteric activator; ligand shared between dimeric partners</note>
    </ligand>
</feature>
<feature type="binding site" evidence="1">
    <location>
        <position position="162"/>
    </location>
    <ligand>
        <name>substrate</name>
        <note>ligand shared between dimeric partners</note>
    </ligand>
</feature>
<feature type="binding site" description="in other chain" evidence="1">
    <location>
        <begin position="169"/>
        <end position="171"/>
    </location>
    <ligand>
        <name>substrate</name>
        <note>ligand shared between dimeric partners</note>
    </ligand>
</feature>
<feature type="binding site" description="in other chain" evidence="1">
    <location>
        <begin position="185"/>
        <end position="187"/>
    </location>
    <ligand>
        <name>ADP</name>
        <dbReference type="ChEBI" id="CHEBI:456216"/>
        <note>allosteric activator; ligand shared between dimeric partners</note>
    </ligand>
</feature>
<feature type="binding site" description="in other chain" evidence="1">
    <location>
        <begin position="213"/>
        <end position="215"/>
    </location>
    <ligand>
        <name>ADP</name>
        <dbReference type="ChEBI" id="CHEBI:456216"/>
        <note>allosteric activator; ligand shared between dimeric partners</note>
    </ligand>
</feature>
<feature type="binding site" description="in other chain" evidence="1">
    <location>
        <position position="222"/>
    </location>
    <ligand>
        <name>substrate</name>
        <note>ligand shared between dimeric partners</note>
    </ligand>
</feature>
<feature type="binding site" evidence="1">
    <location>
        <position position="243"/>
    </location>
    <ligand>
        <name>substrate</name>
        <note>ligand shared between dimeric partners</note>
    </ligand>
</feature>
<feature type="binding site" description="in other chain" evidence="1">
    <location>
        <begin position="249"/>
        <end position="252"/>
    </location>
    <ligand>
        <name>substrate</name>
        <note>ligand shared between dimeric partners</note>
    </ligand>
</feature>
<proteinExistence type="inferred from homology"/>